<gene>
    <name evidence="1" type="primary">ilvD</name>
    <name type="ordered locus">spr1935</name>
</gene>
<name>ILVD_STRR6</name>
<feature type="chain" id="PRO_0000103517" description="Dihydroxy-acid dehydratase">
    <location>
        <begin position="1"/>
        <end position="567"/>
    </location>
</feature>
<feature type="active site" description="Proton acceptor" evidence="1">
    <location>
        <position position="474"/>
    </location>
</feature>
<feature type="binding site" evidence="1">
    <location>
        <position position="52"/>
    </location>
    <ligand>
        <name>[2Fe-2S] cluster</name>
        <dbReference type="ChEBI" id="CHEBI:190135"/>
    </ligand>
</feature>
<feature type="binding site" evidence="1">
    <location>
        <position position="84"/>
    </location>
    <ligand>
        <name>Mg(2+)</name>
        <dbReference type="ChEBI" id="CHEBI:18420"/>
    </ligand>
</feature>
<feature type="binding site" evidence="1">
    <location>
        <position position="125"/>
    </location>
    <ligand>
        <name>[2Fe-2S] cluster</name>
        <dbReference type="ChEBI" id="CHEBI:190135"/>
    </ligand>
</feature>
<feature type="binding site" evidence="1">
    <location>
        <position position="126"/>
    </location>
    <ligand>
        <name>Mg(2+)</name>
        <dbReference type="ChEBI" id="CHEBI:18420"/>
    </ligand>
</feature>
<feature type="binding site" description="via carbamate group" evidence="1">
    <location>
        <position position="127"/>
    </location>
    <ligand>
        <name>Mg(2+)</name>
        <dbReference type="ChEBI" id="CHEBI:18420"/>
    </ligand>
</feature>
<feature type="binding site" evidence="1">
    <location>
        <position position="197"/>
    </location>
    <ligand>
        <name>[2Fe-2S] cluster</name>
        <dbReference type="ChEBI" id="CHEBI:190135"/>
    </ligand>
</feature>
<feature type="binding site" evidence="1">
    <location>
        <position position="448"/>
    </location>
    <ligand>
        <name>Mg(2+)</name>
        <dbReference type="ChEBI" id="CHEBI:18420"/>
    </ligand>
</feature>
<feature type="modified residue" description="N6-carboxylysine" evidence="1">
    <location>
        <position position="127"/>
    </location>
</feature>
<sequence length="567" mass="59859">MTELDKRHRSSIYDSMVKSPNRAMLRATGMTDKDFETSIVGVISTWAENTPCNIHLHDFGKLAKEGVKSAGAWPVQFGTITVADGIAMGTPGMRFSLTSRDIIADSIEAAMSGHNVDAFVAIGGCDKNMPGSMIAIANMDIPAIFAYGGTIAPGNLDGKDIDLVSVFEGIGKWNHGDMTAEDVKRLECNACPGPGGCGGMYTANTMATAIEVLGMSLPGSSSHPAESADKKEDIEAAGRAVVKMLELGLKPSDILTREAFEDAITVTMALGGSTNATLHLLAIAHAANVDLSLEDFNTIQERVPHLADLKPSGQYVFQDLYEVGGVPAVMKYLLANGFLHGDRITCTGKTVAENLADFADLTPGQKVIMPLENPKRADGPLIILNGNLAPDGAVAKVSGVKVRRHVGPAKVFDSEEDAIQAVLTDEIVDGDVVVVRFVGPKGGPGMPEMLSLSSMIVGKGQGDKVALLTDGRFSGGTYGLVVGHIAPEAQDGGPIAYLRTGDIVTVDQDTKEISMAVSEEELEKRKAETTLPPLYSRGVLGKYAHIVSSASRGAVTDFWNMDKSGKK</sequence>
<keyword id="KW-0001">2Fe-2S</keyword>
<keyword id="KW-0028">Amino-acid biosynthesis</keyword>
<keyword id="KW-0100">Branched-chain amino acid biosynthesis</keyword>
<keyword id="KW-0408">Iron</keyword>
<keyword id="KW-0411">Iron-sulfur</keyword>
<keyword id="KW-0456">Lyase</keyword>
<keyword id="KW-0460">Magnesium</keyword>
<keyword id="KW-0479">Metal-binding</keyword>
<keyword id="KW-1185">Reference proteome</keyword>
<protein>
    <recommendedName>
        <fullName evidence="1">Dihydroxy-acid dehydratase</fullName>
        <shortName evidence="1">DAD</shortName>
        <ecNumber evidence="1">4.2.1.9</ecNumber>
    </recommendedName>
</protein>
<comment type="function">
    <text evidence="1">Functions in the biosynthesis of branched-chain amino acids. Catalyzes the dehydration of (2R,3R)-2,3-dihydroxy-3-methylpentanoate (2,3-dihydroxy-3-methylvalerate) into 2-oxo-3-methylpentanoate (2-oxo-3-methylvalerate) and of (2R)-2,3-dihydroxy-3-methylbutanoate (2,3-dihydroxyisovalerate) into 2-oxo-3-methylbutanoate (2-oxoisovalerate), the penultimate precursor to L-isoleucine and L-valine, respectively.</text>
</comment>
<comment type="catalytic activity">
    <reaction evidence="1">
        <text>(2R)-2,3-dihydroxy-3-methylbutanoate = 3-methyl-2-oxobutanoate + H2O</text>
        <dbReference type="Rhea" id="RHEA:24809"/>
        <dbReference type="ChEBI" id="CHEBI:11851"/>
        <dbReference type="ChEBI" id="CHEBI:15377"/>
        <dbReference type="ChEBI" id="CHEBI:49072"/>
        <dbReference type="EC" id="4.2.1.9"/>
    </reaction>
    <physiologicalReaction direction="left-to-right" evidence="1">
        <dbReference type="Rhea" id="RHEA:24810"/>
    </physiologicalReaction>
</comment>
<comment type="catalytic activity">
    <reaction evidence="1">
        <text>(2R,3R)-2,3-dihydroxy-3-methylpentanoate = (S)-3-methyl-2-oxopentanoate + H2O</text>
        <dbReference type="Rhea" id="RHEA:27694"/>
        <dbReference type="ChEBI" id="CHEBI:15377"/>
        <dbReference type="ChEBI" id="CHEBI:35146"/>
        <dbReference type="ChEBI" id="CHEBI:49258"/>
        <dbReference type="EC" id="4.2.1.9"/>
    </reaction>
    <physiologicalReaction direction="left-to-right" evidence="1">
        <dbReference type="Rhea" id="RHEA:27695"/>
    </physiologicalReaction>
</comment>
<comment type="cofactor">
    <cofactor evidence="1">
        <name>[2Fe-2S] cluster</name>
        <dbReference type="ChEBI" id="CHEBI:190135"/>
    </cofactor>
    <text evidence="1">Binds 1 [2Fe-2S] cluster per subunit. This cluster acts as a Lewis acid cofactor.</text>
</comment>
<comment type="cofactor">
    <cofactor evidence="1">
        <name>Mg(2+)</name>
        <dbReference type="ChEBI" id="CHEBI:18420"/>
    </cofactor>
</comment>
<comment type="pathway">
    <text evidence="1">Amino-acid biosynthesis; L-isoleucine biosynthesis; L-isoleucine from 2-oxobutanoate: step 3/4.</text>
</comment>
<comment type="pathway">
    <text evidence="1">Amino-acid biosynthesis; L-valine biosynthesis; L-valine from pyruvate: step 3/4.</text>
</comment>
<comment type="subunit">
    <text evidence="1">Homodimer.</text>
</comment>
<comment type="similarity">
    <text evidence="1">Belongs to the IlvD/Edd family.</text>
</comment>
<dbReference type="EC" id="4.2.1.9" evidence="1"/>
<dbReference type="EMBL" id="AE007317">
    <property type="protein sequence ID" value="AAL00737.1"/>
    <property type="molecule type" value="Genomic_DNA"/>
</dbReference>
<dbReference type="PIR" id="D98113">
    <property type="entry name" value="D98113"/>
</dbReference>
<dbReference type="RefSeq" id="NP_359526.1">
    <property type="nucleotide sequence ID" value="NC_003098.1"/>
</dbReference>
<dbReference type="RefSeq" id="WP_000137358.1">
    <property type="nucleotide sequence ID" value="NC_003098.1"/>
</dbReference>
<dbReference type="SMR" id="P65160"/>
<dbReference type="STRING" id="171101.spr1935"/>
<dbReference type="KEGG" id="spr:spr1935"/>
<dbReference type="PATRIC" id="fig|171101.6.peg.2090"/>
<dbReference type="eggNOG" id="COG0129">
    <property type="taxonomic scope" value="Bacteria"/>
</dbReference>
<dbReference type="HOGENOM" id="CLU_014271_4_2_9"/>
<dbReference type="UniPathway" id="UPA00047">
    <property type="reaction ID" value="UER00057"/>
</dbReference>
<dbReference type="UniPathway" id="UPA00049">
    <property type="reaction ID" value="UER00061"/>
</dbReference>
<dbReference type="Proteomes" id="UP000000586">
    <property type="component" value="Chromosome"/>
</dbReference>
<dbReference type="GO" id="GO:0051537">
    <property type="term" value="F:2 iron, 2 sulfur cluster binding"/>
    <property type="evidence" value="ECO:0007669"/>
    <property type="project" value="UniProtKB-UniRule"/>
</dbReference>
<dbReference type="GO" id="GO:0004160">
    <property type="term" value="F:dihydroxy-acid dehydratase activity"/>
    <property type="evidence" value="ECO:0000318"/>
    <property type="project" value="GO_Central"/>
</dbReference>
<dbReference type="GO" id="GO:0000287">
    <property type="term" value="F:magnesium ion binding"/>
    <property type="evidence" value="ECO:0007669"/>
    <property type="project" value="UniProtKB-UniRule"/>
</dbReference>
<dbReference type="GO" id="GO:0009082">
    <property type="term" value="P:branched-chain amino acid biosynthetic process"/>
    <property type="evidence" value="ECO:0000318"/>
    <property type="project" value="GO_Central"/>
</dbReference>
<dbReference type="GO" id="GO:0009097">
    <property type="term" value="P:isoleucine biosynthetic process"/>
    <property type="evidence" value="ECO:0007669"/>
    <property type="project" value="UniProtKB-UniRule"/>
</dbReference>
<dbReference type="GO" id="GO:0009099">
    <property type="term" value="P:L-valine biosynthetic process"/>
    <property type="evidence" value="ECO:0007669"/>
    <property type="project" value="UniProtKB-UniRule"/>
</dbReference>
<dbReference type="FunFam" id="3.50.30.80:FF:000001">
    <property type="entry name" value="Dihydroxy-acid dehydratase"/>
    <property type="match status" value="1"/>
</dbReference>
<dbReference type="Gene3D" id="3.50.30.80">
    <property type="entry name" value="IlvD/EDD C-terminal domain-like"/>
    <property type="match status" value="1"/>
</dbReference>
<dbReference type="HAMAP" id="MF_00012">
    <property type="entry name" value="IlvD"/>
    <property type="match status" value="1"/>
</dbReference>
<dbReference type="InterPro" id="IPR050165">
    <property type="entry name" value="DHAD_IlvD/Edd"/>
</dbReference>
<dbReference type="InterPro" id="IPR042096">
    <property type="entry name" value="Dihydro-acid_dehy_C"/>
</dbReference>
<dbReference type="InterPro" id="IPR004404">
    <property type="entry name" value="DihydroxyA_deHydtase"/>
</dbReference>
<dbReference type="InterPro" id="IPR020558">
    <property type="entry name" value="DiOHA_6PGluconate_deHydtase_CS"/>
</dbReference>
<dbReference type="InterPro" id="IPR056740">
    <property type="entry name" value="ILV_EDD_C"/>
</dbReference>
<dbReference type="InterPro" id="IPR000581">
    <property type="entry name" value="ILV_EDD_N"/>
</dbReference>
<dbReference type="InterPro" id="IPR037237">
    <property type="entry name" value="IlvD/EDD_N"/>
</dbReference>
<dbReference type="NCBIfam" id="TIGR00110">
    <property type="entry name" value="ilvD"/>
    <property type="match status" value="1"/>
</dbReference>
<dbReference type="NCBIfam" id="NF002068">
    <property type="entry name" value="PRK00911.1"/>
    <property type="match status" value="1"/>
</dbReference>
<dbReference type="PANTHER" id="PTHR21000">
    <property type="entry name" value="DIHYDROXY-ACID DEHYDRATASE DAD"/>
    <property type="match status" value="1"/>
</dbReference>
<dbReference type="PANTHER" id="PTHR21000:SF5">
    <property type="entry name" value="DIHYDROXY-ACID DEHYDRATASE, MITOCHONDRIAL"/>
    <property type="match status" value="1"/>
</dbReference>
<dbReference type="Pfam" id="PF24877">
    <property type="entry name" value="ILV_EDD_C"/>
    <property type="match status" value="1"/>
</dbReference>
<dbReference type="Pfam" id="PF00920">
    <property type="entry name" value="ILVD_EDD_N"/>
    <property type="match status" value="1"/>
</dbReference>
<dbReference type="SUPFAM" id="SSF143975">
    <property type="entry name" value="IlvD/EDD N-terminal domain-like"/>
    <property type="match status" value="1"/>
</dbReference>
<dbReference type="SUPFAM" id="SSF52016">
    <property type="entry name" value="LeuD/IlvD-like"/>
    <property type="match status" value="1"/>
</dbReference>
<dbReference type="PROSITE" id="PS00886">
    <property type="entry name" value="ILVD_EDD_1"/>
    <property type="match status" value="1"/>
</dbReference>
<dbReference type="PROSITE" id="PS00887">
    <property type="entry name" value="ILVD_EDD_2"/>
    <property type="match status" value="1"/>
</dbReference>
<organism>
    <name type="scientific">Streptococcus pneumoniae (strain ATCC BAA-255 / R6)</name>
    <dbReference type="NCBI Taxonomy" id="171101"/>
    <lineage>
        <taxon>Bacteria</taxon>
        <taxon>Bacillati</taxon>
        <taxon>Bacillota</taxon>
        <taxon>Bacilli</taxon>
        <taxon>Lactobacillales</taxon>
        <taxon>Streptococcaceae</taxon>
        <taxon>Streptococcus</taxon>
    </lineage>
</organism>
<evidence type="ECO:0000255" key="1">
    <source>
        <dbReference type="HAMAP-Rule" id="MF_00012"/>
    </source>
</evidence>
<accession>P65160</accession>
<accession>Q97NC5</accession>
<proteinExistence type="inferred from homology"/>
<reference key="1">
    <citation type="journal article" date="2001" name="J. Bacteriol.">
        <title>Genome of the bacterium Streptococcus pneumoniae strain R6.</title>
        <authorList>
            <person name="Hoskins J."/>
            <person name="Alborn W.E. Jr."/>
            <person name="Arnold J."/>
            <person name="Blaszczak L.C."/>
            <person name="Burgett S."/>
            <person name="DeHoff B.S."/>
            <person name="Estrem S.T."/>
            <person name="Fritz L."/>
            <person name="Fu D.-J."/>
            <person name="Fuller W."/>
            <person name="Geringer C."/>
            <person name="Gilmour R."/>
            <person name="Glass J.S."/>
            <person name="Khoja H."/>
            <person name="Kraft A.R."/>
            <person name="Lagace R.E."/>
            <person name="LeBlanc D.J."/>
            <person name="Lee L.N."/>
            <person name="Lefkowitz E.J."/>
            <person name="Lu J."/>
            <person name="Matsushima P."/>
            <person name="McAhren S.M."/>
            <person name="McHenney M."/>
            <person name="McLeaster K."/>
            <person name="Mundy C.W."/>
            <person name="Nicas T.I."/>
            <person name="Norris F.H."/>
            <person name="O'Gara M."/>
            <person name="Peery R.B."/>
            <person name="Robertson G.T."/>
            <person name="Rockey P."/>
            <person name="Sun P.-M."/>
            <person name="Winkler M.E."/>
            <person name="Yang Y."/>
            <person name="Young-Bellido M."/>
            <person name="Zhao G."/>
            <person name="Zook C.A."/>
            <person name="Baltz R.H."/>
            <person name="Jaskunas S.R."/>
            <person name="Rosteck P.R. Jr."/>
            <person name="Skatrud P.L."/>
            <person name="Glass J.I."/>
        </authorList>
    </citation>
    <scope>NUCLEOTIDE SEQUENCE [LARGE SCALE GENOMIC DNA]</scope>
    <source>
        <strain>ATCC BAA-255 / R6</strain>
    </source>
</reference>